<dbReference type="EC" id="3.4.21.-"/>
<dbReference type="EMBL" id="FJ348240">
    <property type="protein sequence ID" value="ACL37330.1"/>
    <property type="molecule type" value="Genomic_DNA"/>
</dbReference>
<dbReference type="SMR" id="B8XGQ8"/>
<dbReference type="GlyCosmos" id="B8XGQ8">
    <property type="glycosylation" value="4 sites, No reported glycans"/>
</dbReference>
<dbReference type="VEuPathDB" id="FungiDB:TESG_07246"/>
<dbReference type="GO" id="GO:0005576">
    <property type="term" value="C:extracellular region"/>
    <property type="evidence" value="ECO:0007669"/>
    <property type="project" value="UniProtKB-SubCell"/>
</dbReference>
<dbReference type="GO" id="GO:0004252">
    <property type="term" value="F:serine-type endopeptidase activity"/>
    <property type="evidence" value="ECO:0007669"/>
    <property type="project" value="InterPro"/>
</dbReference>
<dbReference type="GO" id="GO:0006508">
    <property type="term" value="P:proteolysis"/>
    <property type="evidence" value="ECO:0007669"/>
    <property type="project" value="UniProtKB-KW"/>
</dbReference>
<dbReference type="CDD" id="cd04077">
    <property type="entry name" value="Peptidases_S8_PCSK9_ProteinaseK_like"/>
    <property type="match status" value="1"/>
</dbReference>
<dbReference type="FunFam" id="3.40.50.200:FF:000014">
    <property type="entry name" value="Proteinase K"/>
    <property type="match status" value="1"/>
</dbReference>
<dbReference type="Gene3D" id="3.30.70.80">
    <property type="entry name" value="Peptidase S8 propeptide/proteinase inhibitor I9"/>
    <property type="match status" value="1"/>
</dbReference>
<dbReference type="Gene3D" id="3.40.50.200">
    <property type="entry name" value="Peptidase S8/S53 domain"/>
    <property type="match status" value="1"/>
</dbReference>
<dbReference type="InterPro" id="IPR034193">
    <property type="entry name" value="PCSK9_ProteinaseK-like"/>
</dbReference>
<dbReference type="InterPro" id="IPR000209">
    <property type="entry name" value="Peptidase_S8/S53_dom"/>
</dbReference>
<dbReference type="InterPro" id="IPR036852">
    <property type="entry name" value="Peptidase_S8/S53_dom_sf"/>
</dbReference>
<dbReference type="InterPro" id="IPR023827">
    <property type="entry name" value="Peptidase_S8_Asp-AS"/>
</dbReference>
<dbReference type="InterPro" id="IPR022398">
    <property type="entry name" value="Peptidase_S8_His-AS"/>
</dbReference>
<dbReference type="InterPro" id="IPR023828">
    <property type="entry name" value="Peptidase_S8_Ser-AS"/>
</dbReference>
<dbReference type="InterPro" id="IPR050131">
    <property type="entry name" value="Peptidase_S8_subtilisin-like"/>
</dbReference>
<dbReference type="InterPro" id="IPR015500">
    <property type="entry name" value="Peptidase_S8_subtilisin-rel"/>
</dbReference>
<dbReference type="InterPro" id="IPR010259">
    <property type="entry name" value="S8pro/Inhibitor_I9"/>
</dbReference>
<dbReference type="InterPro" id="IPR037045">
    <property type="entry name" value="S8pro/Inhibitor_I9_sf"/>
</dbReference>
<dbReference type="PANTHER" id="PTHR43806:SF11">
    <property type="entry name" value="CEREVISIN-RELATED"/>
    <property type="match status" value="1"/>
</dbReference>
<dbReference type="PANTHER" id="PTHR43806">
    <property type="entry name" value="PEPTIDASE S8"/>
    <property type="match status" value="1"/>
</dbReference>
<dbReference type="Pfam" id="PF05922">
    <property type="entry name" value="Inhibitor_I9"/>
    <property type="match status" value="1"/>
</dbReference>
<dbReference type="Pfam" id="PF00082">
    <property type="entry name" value="Peptidase_S8"/>
    <property type="match status" value="1"/>
</dbReference>
<dbReference type="PRINTS" id="PR00723">
    <property type="entry name" value="SUBTILISIN"/>
</dbReference>
<dbReference type="SUPFAM" id="SSF54897">
    <property type="entry name" value="Protease propeptides/inhibitors"/>
    <property type="match status" value="1"/>
</dbReference>
<dbReference type="SUPFAM" id="SSF52743">
    <property type="entry name" value="Subtilisin-like"/>
    <property type="match status" value="1"/>
</dbReference>
<dbReference type="PROSITE" id="PS51892">
    <property type="entry name" value="SUBTILASE"/>
    <property type="match status" value="1"/>
</dbReference>
<dbReference type="PROSITE" id="PS00136">
    <property type="entry name" value="SUBTILASE_ASP"/>
    <property type="match status" value="1"/>
</dbReference>
<dbReference type="PROSITE" id="PS00137">
    <property type="entry name" value="SUBTILASE_HIS"/>
    <property type="match status" value="1"/>
</dbReference>
<dbReference type="PROSITE" id="PS00138">
    <property type="entry name" value="SUBTILASE_SER"/>
    <property type="match status" value="1"/>
</dbReference>
<gene>
    <name type="primary">SUB5</name>
</gene>
<comment type="function">
    <text evidence="1">Secreted subtilisin-like serine protease with keratinolytic activity that contributes to pathogenicity.</text>
</comment>
<comment type="subcellular location">
    <subcellularLocation>
        <location evidence="1">Secreted</location>
    </subcellularLocation>
</comment>
<comment type="similarity">
    <text evidence="5">Belongs to the peptidase S8 family.</text>
</comment>
<evidence type="ECO:0000250" key="1"/>
<evidence type="ECO:0000255" key="2"/>
<evidence type="ECO:0000255" key="3">
    <source>
        <dbReference type="PROSITE-ProRule" id="PRU01240"/>
    </source>
</evidence>
<evidence type="ECO:0000256" key="4">
    <source>
        <dbReference type="SAM" id="MobiDB-lite"/>
    </source>
</evidence>
<evidence type="ECO:0000305" key="5"/>
<feature type="signal peptide" evidence="2">
    <location>
        <begin position="1"/>
        <end position="20"/>
    </location>
</feature>
<feature type="propeptide" id="PRO_0000380802" evidence="1">
    <location>
        <begin position="21"/>
        <end position="116"/>
    </location>
</feature>
<feature type="chain" id="PRO_0000380803" description="Subtilisin-like protease 5">
    <location>
        <begin position="117"/>
        <end position="396"/>
    </location>
</feature>
<feature type="domain" description="Inhibitor I9" evidence="2">
    <location>
        <begin position="37"/>
        <end position="113"/>
    </location>
</feature>
<feature type="domain" description="Peptidase S8" evidence="3">
    <location>
        <begin position="125"/>
        <end position="396"/>
    </location>
</feature>
<feature type="region of interest" description="Disordered" evidence="4">
    <location>
        <begin position="376"/>
        <end position="396"/>
    </location>
</feature>
<feature type="compositionally biased region" description="Polar residues" evidence="4">
    <location>
        <begin position="376"/>
        <end position="389"/>
    </location>
</feature>
<feature type="active site" description="Charge relay system" evidence="3">
    <location>
        <position position="156"/>
    </location>
</feature>
<feature type="active site" description="Charge relay system" evidence="3">
    <location>
        <position position="187"/>
    </location>
</feature>
<feature type="active site" description="Charge relay system" evidence="3">
    <location>
        <position position="342"/>
    </location>
</feature>
<feature type="glycosylation site" description="N-linked (GlcNAc...) asparagine" evidence="2">
    <location>
        <position position="63"/>
    </location>
</feature>
<feature type="glycosylation site" description="N-linked (GlcNAc...) asparagine" evidence="2">
    <location>
        <position position="230"/>
    </location>
</feature>
<feature type="glycosylation site" description="N-linked (GlcNAc...) asparagine" evidence="2">
    <location>
        <position position="248"/>
    </location>
</feature>
<feature type="glycosylation site" description="N-linked (GlcNAc...) asparagine" evidence="2">
    <location>
        <position position="392"/>
    </location>
</feature>
<name>SUB5_TRITO</name>
<sequence length="396" mass="41842">MTGFFTFLSFSLAALSVTNAAHILSVPKGAEVVPNGYIVVMKDDTSQQDFSSHRVWISSIHHNKTRRGLDGAGVKQTYDFDHLRGYSGIFDEDTIKDISNDPKVAFVEPDAIISQHVVVQQRKAPWGLSRLSNRRGGRNYVFDSSAGSGVWAYVVDSGVDIRHSEFQGRAVWGSNLVDNKNSDGTGHGTHVAGTIAGKTYGIAKKAKVVAVKVLNSEGKGPTSGIIAGINWSIRHARKHGMLHKSVLNMSLGGTYSAGLNHATAQAIKAGMFVSVSAGNDNINSNGNSPASERSVCTIAASTENDGKASFSNWGPAVDLYAPGHNILSARPGGGSQTMSGTSMAAPHAAGVAAYLIAKEGIPGNRACLRLKQLSQPTIRNPGPDTTSRLLYNGSGR</sequence>
<reference key="1">
    <citation type="submission" date="2008-10" db="EMBL/GenBank/DDBJ databases">
        <title>Comparing putative pathogenicity factors between Trichophyton tonsurans and Trichophyton equinum.</title>
        <authorList>
            <person name="Preuett B.L."/>
            <person name="Abdel-Rahman S.M."/>
        </authorList>
    </citation>
    <scope>NUCLEOTIDE SEQUENCE [GENOMIC DNA]</scope>
</reference>
<organism>
    <name type="scientific">Trichophyton tonsurans</name>
    <name type="common">Scalp ringworm fungus</name>
    <dbReference type="NCBI Taxonomy" id="34387"/>
    <lineage>
        <taxon>Eukaryota</taxon>
        <taxon>Fungi</taxon>
        <taxon>Dikarya</taxon>
        <taxon>Ascomycota</taxon>
        <taxon>Pezizomycotina</taxon>
        <taxon>Eurotiomycetes</taxon>
        <taxon>Eurotiomycetidae</taxon>
        <taxon>Onygenales</taxon>
        <taxon>Arthrodermataceae</taxon>
        <taxon>Trichophyton</taxon>
    </lineage>
</organism>
<protein>
    <recommendedName>
        <fullName>Subtilisin-like protease 5</fullName>
        <ecNumber>3.4.21.-</ecNumber>
    </recommendedName>
</protein>
<accession>B8XGQ8</accession>
<keyword id="KW-0325">Glycoprotein</keyword>
<keyword id="KW-0378">Hydrolase</keyword>
<keyword id="KW-0645">Protease</keyword>
<keyword id="KW-0964">Secreted</keyword>
<keyword id="KW-0720">Serine protease</keyword>
<keyword id="KW-0732">Signal</keyword>
<keyword id="KW-0843">Virulence</keyword>
<keyword id="KW-0865">Zymogen</keyword>
<proteinExistence type="inferred from homology"/>